<reference key="1">
    <citation type="journal article" date="1995" name="Proc. Natl. Acad. Sci. U.S.A.">
        <title>Cloning and expression of a second photoreceptor-specific membrane retina guanylyl cyclase (RetGC), RetGC-2.</title>
        <authorList>
            <person name="Lowe D.G."/>
            <person name="Dizhoor A.M."/>
            <person name="Liu K."/>
            <person name="Gu Q."/>
            <person name="Spencer M."/>
            <person name="Laura R."/>
            <person name="Lu L."/>
            <person name="Hurley J.B."/>
        </authorList>
    </citation>
    <scope>NUCLEOTIDE SEQUENCE [MRNA]</scope>
    <scope>VARIANT GLN-296</scope>
    <scope>TISSUE SPECIFICITY</scope>
    <scope>ACTIVITY REGULATION</scope>
    <scope>CATALYTIC ACTIVITY</scope>
    <source>
        <tissue>Retina</tissue>
    </source>
</reference>
<reference key="2">
    <citation type="journal article" date="2005" name="Nature">
        <title>The DNA sequence of the human X chromosome.</title>
        <authorList>
            <person name="Ross M.T."/>
            <person name="Grafham D.V."/>
            <person name="Coffey A.J."/>
            <person name="Scherer S."/>
            <person name="McLay K."/>
            <person name="Muzny D."/>
            <person name="Platzer M."/>
            <person name="Howell G.R."/>
            <person name="Burrows C."/>
            <person name="Bird C.P."/>
            <person name="Frankish A."/>
            <person name="Lovell F.L."/>
            <person name="Howe K.L."/>
            <person name="Ashurst J.L."/>
            <person name="Fulton R.S."/>
            <person name="Sudbrak R."/>
            <person name="Wen G."/>
            <person name="Jones M.C."/>
            <person name="Hurles M.E."/>
            <person name="Andrews T.D."/>
            <person name="Scott C.E."/>
            <person name="Searle S."/>
            <person name="Ramser J."/>
            <person name="Whittaker A."/>
            <person name="Deadman R."/>
            <person name="Carter N.P."/>
            <person name="Hunt S.E."/>
            <person name="Chen R."/>
            <person name="Cree A."/>
            <person name="Gunaratne P."/>
            <person name="Havlak P."/>
            <person name="Hodgson A."/>
            <person name="Metzker M.L."/>
            <person name="Richards S."/>
            <person name="Scott G."/>
            <person name="Steffen D."/>
            <person name="Sodergren E."/>
            <person name="Wheeler D.A."/>
            <person name="Worley K.C."/>
            <person name="Ainscough R."/>
            <person name="Ambrose K.D."/>
            <person name="Ansari-Lari M.A."/>
            <person name="Aradhya S."/>
            <person name="Ashwell R.I."/>
            <person name="Babbage A.K."/>
            <person name="Bagguley C.L."/>
            <person name="Ballabio A."/>
            <person name="Banerjee R."/>
            <person name="Barker G.E."/>
            <person name="Barlow K.F."/>
            <person name="Barrett I.P."/>
            <person name="Bates K.N."/>
            <person name="Beare D.M."/>
            <person name="Beasley H."/>
            <person name="Beasley O."/>
            <person name="Beck A."/>
            <person name="Bethel G."/>
            <person name="Blechschmidt K."/>
            <person name="Brady N."/>
            <person name="Bray-Allen S."/>
            <person name="Bridgeman A.M."/>
            <person name="Brown A.J."/>
            <person name="Brown M.J."/>
            <person name="Bonnin D."/>
            <person name="Bruford E.A."/>
            <person name="Buhay C."/>
            <person name="Burch P."/>
            <person name="Burford D."/>
            <person name="Burgess J."/>
            <person name="Burrill W."/>
            <person name="Burton J."/>
            <person name="Bye J.M."/>
            <person name="Carder C."/>
            <person name="Carrel L."/>
            <person name="Chako J."/>
            <person name="Chapman J.C."/>
            <person name="Chavez D."/>
            <person name="Chen E."/>
            <person name="Chen G."/>
            <person name="Chen Y."/>
            <person name="Chen Z."/>
            <person name="Chinault C."/>
            <person name="Ciccodicola A."/>
            <person name="Clark S.Y."/>
            <person name="Clarke G."/>
            <person name="Clee C.M."/>
            <person name="Clegg S."/>
            <person name="Clerc-Blankenburg K."/>
            <person name="Clifford K."/>
            <person name="Cobley V."/>
            <person name="Cole C.G."/>
            <person name="Conquer J.S."/>
            <person name="Corby N."/>
            <person name="Connor R.E."/>
            <person name="David R."/>
            <person name="Davies J."/>
            <person name="Davis C."/>
            <person name="Davis J."/>
            <person name="Delgado O."/>
            <person name="Deshazo D."/>
            <person name="Dhami P."/>
            <person name="Ding Y."/>
            <person name="Dinh H."/>
            <person name="Dodsworth S."/>
            <person name="Draper H."/>
            <person name="Dugan-Rocha S."/>
            <person name="Dunham A."/>
            <person name="Dunn M."/>
            <person name="Durbin K.J."/>
            <person name="Dutta I."/>
            <person name="Eades T."/>
            <person name="Ellwood M."/>
            <person name="Emery-Cohen A."/>
            <person name="Errington H."/>
            <person name="Evans K.L."/>
            <person name="Faulkner L."/>
            <person name="Francis F."/>
            <person name="Frankland J."/>
            <person name="Fraser A.E."/>
            <person name="Galgoczy P."/>
            <person name="Gilbert J."/>
            <person name="Gill R."/>
            <person name="Gloeckner G."/>
            <person name="Gregory S.G."/>
            <person name="Gribble S."/>
            <person name="Griffiths C."/>
            <person name="Grocock R."/>
            <person name="Gu Y."/>
            <person name="Gwilliam R."/>
            <person name="Hamilton C."/>
            <person name="Hart E.A."/>
            <person name="Hawes A."/>
            <person name="Heath P.D."/>
            <person name="Heitmann K."/>
            <person name="Hennig S."/>
            <person name="Hernandez J."/>
            <person name="Hinzmann B."/>
            <person name="Ho S."/>
            <person name="Hoffs M."/>
            <person name="Howden P.J."/>
            <person name="Huckle E.J."/>
            <person name="Hume J."/>
            <person name="Hunt P.J."/>
            <person name="Hunt A.R."/>
            <person name="Isherwood J."/>
            <person name="Jacob L."/>
            <person name="Johnson D."/>
            <person name="Jones S."/>
            <person name="de Jong P.J."/>
            <person name="Joseph S.S."/>
            <person name="Keenan S."/>
            <person name="Kelly S."/>
            <person name="Kershaw J.K."/>
            <person name="Khan Z."/>
            <person name="Kioschis P."/>
            <person name="Klages S."/>
            <person name="Knights A.J."/>
            <person name="Kosiura A."/>
            <person name="Kovar-Smith C."/>
            <person name="Laird G.K."/>
            <person name="Langford C."/>
            <person name="Lawlor S."/>
            <person name="Leversha M."/>
            <person name="Lewis L."/>
            <person name="Liu W."/>
            <person name="Lloyd C."/>
            <person name="Lloyd D.M."/>
            <person name="Loulseged H."/>
            <person name="Loveland J.E."/>
            <person name="Lovell J.D."/>
            <person name="Lozado R."/>
            <person name="Lu J."/>
            <person name="Lyne R."/>
            <person name="Ma J."/>
            <person name="Maheshwari M."/>
            <person name="Matthews L.H."/>
            <person name="McDowall J."/>
            <person name="McLaren S."/>
            <person name="McMurray A."/>
            <person name="Meidl P."/>
            <person name="Meitinger T."/>
            <person name="Milne S."/>
            <person name="Miner G."/>
            <person name="Mistry S.L."/>
            <person name="Morgan M."/>
            <person name="Morris S."/>
            <person name="Mueller I."/>
            <person name="Mullikin J.C."/>
            <person name="Nguyen N."/>
            <person name="Nordsiek G."/>
            <person name="Nyakatura G."/>
            <person name="O'dell C.N."/>
            <person name="Okwuonu G."/>
            <person name="Palmer S."/>
            <person name="Pandian R."/>
            <person name="Parker D."/>
            <person name="Parrish J."/>
            <person name="Pasternak S."/>
            <person name="Patel D."/>
            <person name="Pearce A.V."/>
            <person name="Pearson D.M."/>
            <person name="Pelan S.E."/>
            <person name="Perez L."/>
            <person name="Porter K.M."/>
            <person name="Ramsey Y."/>
            <person name="Reichwald K."/>
            <person name="Rhodes S."/>
            <person name="Ridler K.A."/>
            <person name="Schlessinger D."/>
            <person name="Schueler M.G."/>
            <person name="Sehra H.K."/>
            <person name="Shaw-Smith C."/>
            <person name="Shen H."/>
            <person name="Sheridan E.M."/>
            <person name="Shownkeen R."/>
            <person name="Skuce C.D."/>
            <person name="Smith M.L."/>
            <person name="Sotheran E.C."/>
            <person name="Steingruber H.E."/>
            <person name="Steward C.A."/>
            <person name="Storey R."/>
            <person name="Swann R.M."/>
            <person name="Swarbreck D."/>
            <person name="Tabor P.E."/>
            <person name="Taudien S."/>
            <person name="Taylor T."/>
            <person name="Teague B."/>
            <person name="Thomas K."/>
            <person name="Thorpe A."/>
            <person name="Timms K."/>
            <person name="Tracey A."/>
            <person name="Trevanion S."/>
            <person name="Tromans A.C."/>
            <person name="d'Urso M."/>
            <person name="Verduzco D."/>
            <person name="Villasana D."/>
            <person name="Waldron L."/>
            <person name="Wall M."/>
            <person name="Wang Q."/>
            <person name="Warren J."/>
            <person name="Warry G.L."/>
            <person name="Wei X."/>
            <person name="West A."/>
            <person name="Whitehead S.L."/>
            <person name="Whiteley M.N."/>
            <person name="Wilkinson J.E."/>
            <person name="Willey D.L."/>
            <person name="Williams G."/>
            <person name="Williams L."/>
            <person name="Williamson A."/>
            <person name="Williamson H."/>
            <person name="Wilming L."/>
            <person name="Woodmansey R.L."/>
            <person name="Wray P.W."/>
            <person name="Yen J."/>
            <person name="Zhang J."/>
            <person name="Zhou J."/>
            <person name="Zoghbi H."/>
            <person name="Zorilla S."/>
            <person name="Buck D."/>
            <person name="Reinhardt R."/>
            <person name="Poustka A."/>
            <person name="Rosenthal A."/>
            <person name="Lehrach H."/>
            <person name="Meindl A."/>
            <person name="Minx P.J."/>
            <person name="Hillier L.W."/>
            <person name="Willard H.F."/>
            <person name="Wilson R.K."/>
            <person name="Waterston R.H."/>
            <person name="Rice C.M."/>
            <person name="Vaudin M."/>
            <person name="Coulson A."/>
            <person name="Nelson D.L."/>
            <person name="Weinstock G."/>
            <person name="Sulston J.E."/>
            <person name="Durbin R.M."/>
            <person name="Hubbard T."/>
            <person name="Gibbs R.A."/>
            <person name="Beck S."/>
            <person name="Rogers J."/>
            <person name="Bentley D.R."/>
        </authorList>
    </citation>
    <scope>NUCLEOTIDE SEQUENCE [LARGE SCALE GENOMIC DNA]</scope>
</reference>
<reference key="3">
    <citation type="journal article" date="2006" name="Science">
        <title>The consensus coding sequences of human breast and colorectal cancers.</title>
        <authorList>
            <person name="Sjoeblom T."/>
            <person name="Jones S."/>
            <person name="Wood L.D."/>
            <person name="Parsons D.W."/>
            <person name="Lin J."/>
            <person name="Barber T.D."/>
            <person name="Mandelker D."/>
            <person name="Leary R.J."/>
            <person name="Ptak J."/>
            <person name="Silliman N."/>
            <person name="Szabo S."/>
            <person name="Buckhaults P."/>
            <person name="Farrell C."/>
            <person name="Meeh P."/>
            <person name="Markowitz S.D."/>
            <person name="Willis J."/>
            <person name="Dawson D."/>
            <person name="Willson J.K.V."/>
            <person name="Gazdar A.F."/>
            <person name="Hartigan J."/>
            <person name="Wu L."/>
            <person name="Liu C."/>
            <person name="Parmigiani G."/>
            <person name="Park B.H."/>
            <person name="Bachman K.E."/>
            <person name="Papadopoulos N."/>
            <person name="Vogelstein B."/>
            <person name="Kinzler K.W."/>
            <person name="Velculescu V.E."/>
        </authorList>
    </citation>
    <scope>VARIANT [LARGE SCALE ANALYSIS] PRO-10</scope>
</reference>
<reference key="4">
    <citation type="journal article" date="2007" name="Nature">
        <title>Patterns of somatic mutation in human cancer genomes.</title>
        <authorList>
            <person name="Greenman C."/>
            <person name="Stephens P."/>
            <person name="Smith R."/>
            <person name="Dalgliesh G.L."/>
            <person name="Hunter C."/>
            <person name="Bignell G."/>
            <person name="Davies H."/>
            <person name="Teague J."/>
            <person name="Butler A."/>
            <person name="Stevens C."/>
            <person name="Edkins S."/>
            <person name="O'Meara S."/>
            <person name="Vastrik I."/>
            <person name="Schmidt E.E."/>
            <person name="Avis T."/>
            <person name="Barthorpe S."/>
            <person name="Bhamra G."/>
            <person name="Buck G."/>
            <person name="Choudhury B."/>
            <person name="Clements J."/>
            <person name="Cole J."/>
            <person name="Dicks E."/>
            <person name="Forbes S."/>
            <person name="Gray K."/>
            <person name="Halliday K."/>
            <person name="Harrison R."/>
            <person name="Hills K."/>
            <person name="Hinton J."/>
            <person name="Jenkinson A."/>
            <person name="Jones D."/>
            <person name="Menzies A."/>
            <person name="Mironenko T."/>
            <person name="Perry J."/>
            <person name="Raine K."/>
            <person name="Richardson D."/>
            <person name="Shepherd R."/>
            <person name="Small A."/>
            <person name="Tofts C."/>
            <person name="Varian J."/>
            <person name="Webb T."/>
            <person name="West S."/>
            <person name="Widaa S."/>
            <person name="Yates A."/>
            <person name="Cahill D.P."/>
            <person name="Louis D.N."/>
            <person name="Goldstraw P."/>
            <person name="Nicholson A.G."/>
            <person name="Brasseur F."/>
            <person name="Looijenga L."/>
            <person name="Weber B.L."/>
            <person name="Chiew Y.-E."/>
            <person name="DeFazio A."/>
            <person name="Greaves M.F."/>
            <person name="Green A.R."/>
            <person name="Campbell P."/>
            <person name="Birney E."/>
            <person name="Easton D.F."/>
            <person name="Chenevix-Trench G."/>
            <person name="Tan M.-H."/>
            <person name="Khoo S.K."/>
            <person name="Teh B.T."/>
            <person name="Yuen S.T."/>
            <person name="Leung S.Y."/>
            <person name="Wooster R."/>
            <person name="Futreal P.A."/>
            <person name="Stratton M.R."/>
        </authorList>
    </citation>
    <scope>VARIANTS [LARGE SCALE ANALYSIS] CYS-40; ASN-160; TRP-230; PRO-284; GLN-305; CYS-308; HIS-380; ARG-434; ASP-568; GLN-628; LEU-677; LYS-794; VAL-1010; ARG-1052 AND ASP-1055</scope>
</reference>
<reference key="5">
    <citation type="journal article" date="2012" name="N. Engl. J. Med.">
        <title>Diagnostic exome sequencing in persons with severe intellectual disability.</title>
        <authorList>
            <person name="de Ligt J."/>
            <person name="Willemsen M.H."/>
            <person name="van Bon B.W."/>
            <person name="Kleefstra T."/>
            <person name="Yntema H.G."/>
            <person name="Kroes T."/>
            <person name="Vulto-van Silfhout A.T."/>
            <person name="Koolen D.A."/>
            <person name="de Vries P."/>
            <person name="Gilissen C."/>
            <person name="del Rosario M."/>
            <person name="Hoischen A."/>
            <person name="Scheffer H."/>
            <person name="de Vries B.B."/>
            <person name="Brunner H.G."/>
            <person name="Veltman J.A."/>
            <person name="Vissers L.E."/>
        </authorList>
    </citation>
    <scope>VARIANT ASP-872</scope>
</reference>
<reference key="6">
    <citation type="journal article" date="2018" name="Front. Mol. Neurosci.">
        <title>Control of the Nucleotide Cycle in Photoreceptor Cell Extracts by Retinal Degeneration Protein 3.</title>
        <authorList>
            <person name="Wimberg H."/>
            <person name="Janssen-Bienhold U."/>
            <person name="Koch K.W."/>
        </authorList>
    </citation>
    <scope>ACTIVITY REGULATION</scope>
</reference>
<sequence length="1108" mass="124850">MFLGLGRFSRLVLWFAAFRKLLGHHGLASAKFLWCLCLLSVMSLPQQVWTLPYKIGVVGPWACDSLFSKALPEVAARLAIERINRDPSFDLSYSFEYVILNEDCQTSRALSSFISHHQMASGFIGPTNPGYCEAASLLGNSWDKGIFSWACVNYELDNKISYPTFSRTLPSPIRVLVTVMKYFQWAHAGVISSDEDIWVHTANRVASALRSHGLPVGVVLTTGQDSQSMRKALQRIHQADRIRIIIMCMHSALIGGETQMHLLECAHDLKMTDGTYVFVPYDALLYSLPYKHTPYRVLRNNPKLREAYDAVLTITVESQEKTFYQAFTEAAARGEIPEKLEFDQVSPLFGTIYNSIYFIAQAMNNAMKENGQAGAASLVQHSRNMQFHGFNQLMRTDSNGNGISEYVILDTNLKEWELHSTYTVDMEMELLRFGGTPIHFPGGRPPRADAKCWFAEGKICHGGIDPAFAMMVCLTLLIALLSINGFAYFIRRRINKIQLIKGPNRILLTLEDVTFINPHFGSKRGSRASVSFQITSEVQSGRSPRLSFSSGSLTPATYENSNIAIYEGDWVWLKKFSLGDFGDLKSIKSRASDVFEMMKDLRHENINPLLGFFYDSGMFAIVTEFCSRGSLEDILTNQDVKLDWMFKSSLLLDLIKGMKYLHHREFVHGRLKSRNCVVDGRFVLKVTDYGFNDILEMLRLSEEESSMEELLWTAPELLRAPRGSRLGSFAGDVYSFAIIMQEVMVRGTPFCMMDLPAQEIINRLKKPPPVYRPVVPPEHAPPECLQLMKQCWAEAAEQRPTFDEIFNQFKTFNKGKKTNIIDSMLRMLEQYSSNLEDLIRERTEELEIEKQKTEKLLTQMLPPSVAESLKKGCTVEPEGFDLVTLYFSDIVGFTTISAMSEPIEVVDLLNDLYTLFDAIIGSHDVYKVETIGDAYMVASGLPKRNGSRHAAEIANMSLDILSSVGTFKMRHMPEVPVRIRIGLHSGPVVAGVVGLTMPRYCLFGDTVNTASRMESTGLPYRIHVSLSTVTILQNLSEGYEVELRGRTELKGKGTEETFWLIGKKGFMKPLPVPPPVDKDGQVGHGLQPVEIAAFQRRKAERQLVRNKP</sequence>
<feature type="signal peptide" evidence="5">
    <location>
        <begin position="1"/>
        <end position="50"/>
    </location>
</feature>
<feature type="chain" id="PRO_0000012386" description="Retinal guanylyl cyclase 2">
    <location>
        <begin position="51"/>
        <end position="1108"/>
    </location>
</feature>
<feature type="topological domain" description="Extracellular" evidence="5">
    <location>
        <begin position="51"/>
        <end position="467"/>
    </location>
</feature>
<feature type="transmembrane region" description="Helical" evidence="5">
    <location>
        <begin position="468"/>
        <end position="490"/>
    </location>
</feature>
<feature type="topological domain" description="Cytoplasmic" evidence="5">
    <location>
        <begin position="491"/>
        <end position="1108"/>
    </location>
</feature>
<feature type="domain" description="Protein kinase" evidence="7">
    <location>
        <begin position="532"/>
        <end position="812"/>
    </location>
</feature>
<feature type="domain" description="Guanylate cyclase" evidence="6">
    <location>
        <begin position="884"/>
        <end position="1014"/>
    </location>
</feature>
<feature type="disulfide bond" evidence="1">
    <location>
        <begin position="104"/>
        <end position="132"/>
    </location>
</feature>
<feature type="disulfide bond" description="Interchain" evidence="1">
    <location>
        <position position="452"/>
    </location>
</feature>
<feature type="disulfide bond" description="Interchain" evidence="1">
    <location>
        <position position="460"/>
    </location>
</feature>
<feature type="sequence variant" id="VAR_036419" description="In a breast cancer sample; somatic mutation; dbSNP:rs755991142." evidence="9">
    <original>R</original>
    <variation>P</variation>
    <location>
        <position position="10"/>
    </location>
</feature>
<feature type="sequence variant" id="VAR_042233" description="In dbSNP:rs34228145." evidence="10">
    <original>S</original>
    <variation>C</variation>
    <location>
        <position position="40"/>
    </location>
</feature>
<feature type="sequence variant" id="VAR_042234" description="In dbSNP:rs33971675." evidence="10">
    <original>I</original>
    <variation>N</variation>
    <location>
        <position position="160"/>
    </location>
</feature>
<feature type="sequence variant" id="VAR_042235" description="In dbSNP:rs33973457." evidence="10">
    <original>R</original>
    <variation>W</variation>
    <location>
        <position position="230"/>
    </location>
</feature>
<feature type="sequence variant" id="VAR_009136" description="In dbSNP:rs12008095." evidence="10">
    <original>L</original>
    <variation>P</variation>
    <location>
        <position position="284"/>
    </location>
</feature>
<feature type="sequence variant" id="VAR_009137" description="In dbSNP:rs502209." evidence="13">
    <original>R</original>
    <variation>Q</variation>
    <location>
        <position position="296"/>
    </location>
</feature>
<feature type="sequence variant" id="VAR_042236" description="In dbSNP:rs55966326." evidence="10">
    <original>R</original>
    <variation>Q</variation>
    <location>
        <position position="305"/>
    </location>
</feature>
<feature type="sequence variant" id="VAR_030633" description="In dbSNP:rs16985750." evidence="10">
    <original>Y</original>
    <variation>C</variation>
    <location>
        <position position="308"/>
    </location>
</feature>
<feature type="sequence variant" id="VAR_030634" description="In dbSNP:rs2272925." evidence="10">
    <original>Q</original>
    <variation>H</variation>
    <location>
        <position position="380"/>
    </location>
</feature>
<feature type="sequence variant" id="VAR_042237" description="In dbSNP:rs56293008." evidence="10">
    <original>G</original>
    <variation>R</variation>
    <location>
        <position position="434"/>
    </location>
</feature>
<feature type="sequence variant" id="VAR_042238" description="In a glioblastoma multiforme sample; somatic mutation; dbSNP:rs779221554." evidence="10">
    <original>G</original>
    <variation>D</variation>
    <location>
        <position position="568"/>
    </location>
</feature>
<feature type="sequence variant" id="VAR_030635" description="In dbSNP:rs7883913." evidence="10">
    <original>R</original>
    <variation>Q</variation>
    <location>
        <position position="628"/>
    </location>
</feature>
<feature type="sequence variant" id="VAR_042239" description="In dbSNP:rs35474112." evidence="10">
    <original>V</original>
    <variation>L</variation>
    <location>
        <position position="677"/>
    </location>
</feature>
<feature type="sequence variant" id="VAR_042240" description="In dbSNP:rs35726803." evidence="10">
    <original>E</original>
    <variation>K</variation>
    <location>
        <position position="794"/>
    </location>
</feature>
<feature type="sequence variant" id="VAR_069424" description="In dbSNP:rs148663380." evidence="11">
    <original>G</original>
    <variation>D</variation>
    <location>
        <position position="872"/>
    </location>
</feature>
<feature type="sequence variant" id="VAR_042241" description="In dbSNP:rs55735218." evidence="10">
    <original>A</original>
    <variation>V</variation>
    <location>
        <position position="1010"/>
    </location>
</feature>
<feature type="sequence variant" id="VAR_042242" description="In a lung adenocarcinoma sample; somatic mutation." evidence="10">
    <original>K</original>
    <variation>R</variation>
    <location>
        <position position="1052"/>
    </location>
</feature>
<feature type="sequence variant" id="VAR_042243" description="In a lung squamous cell carcinoma sample; somatic mutation." evidence="10">
    <original>E</original>
    <variation>D</variation>
    <location>
        <position position="1055"/>
    </location>
</feature>
<gene>
    <name type="primary">GUCY2F</name>
    <name type="synonym">GUC2F</name>
    <name type="synonym">RETGC2</name>
</gene>
<proteinExistence type="evidence at protein level"/>
<comment type="function">
    <text evidence="4 13">Responsible for the synthesis of cyclic GMP (cGMP) in rods and cones of photoreceptors (PubMed:7777544). Plays an essential role in phototransduction, by mediating cGMP replenishment (By similarity). May also participate in the trafficking of membrane-asociated proteins to the photoreceptor outer segment membrane (By similarity).</text>
</comment>
<comment type="catalytic activity">
    <reaction evidence="13">
        <text>GTP = 3',5'-cyclic GMP + diphosphate</text>
        <dbReference type="Rhea" id="RHEA:13665"/>
        <dbReference type="ChEBI" id="CHEBI:33019"/>
        <dbReference type="ChEBI" id="CHEBI:37565"/>
        <dbReference type="ChEBI" id="CHEBI:57746"/>
        <dbReference type="EC" id="4.6.1.2"/>
    </reaction>
</comment>
<comment type="activity regulation">
    <text evidence="8 12">Activated by GUCA1B when free calcium ions concentration is low, and inhibited by GUCA1B when free calcium ions concentration is high (PubMed:15772651). Inhibited by RD3 (PubMed:29515371).</text>
</comment>
<comment type="subunit">
    <text evidence="3 4">Homodimer (By similarity). Interacts with RD3; promotes the exit of GUCY2F from the endoplasmic reticulum and its trafficking to the photoreceptor outer segments (By similarity).</text>
</comment>
<comment type="subcellular location">
    <subcellularLocation>
        <location evidence="2">Photoreceptor outer segment membrane</location>
        <topology evidence="5">Single-pass type I membrane protein</topology>
    </subcellularLocation>
</comment>
<comment type="tissue specificity">
    <text evidence="13">Retina. Localized exclusively in the outer nuclear layer and inner segments of the rod and cone photoreceptor cells.</text>
</comment>
<comment type="domain">
    <text>The protein kinase domain is predicted to be catalytically inactive.</text>
</comment>
<comment type="PTM">
    <text>There are 9 conserved cysteine residues in sensory guanylate cyclases, 6 in the extracellular domain, which may be involved in intra- or interchain disulfide bonds.</text>
</comment>
<comment type="similarity">
    <text evidence="6">Belongs to the adenylyl cyclase class-4/guanylyl cyclase family.</text>
</comment>
<evidence type="ECO:0000250" key="1"/>
<evidence type="ECO:0000250" key="2">
    <source>
        <dbReference type="UniProtKB" id="O02740"/>
    </source>
</evidence>
<evidence type="ECO:0000250" key="3">
    <source>
        <dbReference type="UniProtKB" id="P51842"/>
    </source>
</evidence>
<evidence type="ECO:0000250" key="4">
    <source>
        <dbReference type="UniProtKB" id="Q5SDA5"/>
    </source>
</evidence>
<evidence type="ECO:0000255" key="5"/>
<evidence type="ECO:0000255" key="6">
    <source>
        <dbReference type="PROSITE-ProRule" id="PRU00099"/>
    </source>
</evidence>
<evidence type="ECO:0000255" key="7">
    <source>
        <dbReference type="PROSITE-ProRule" id="PRU00159"/>
    </source>
</evidence>
<evidence type="ECO:0000269" key="8">
    <source>
    </source>
</evidence>
<evidence type="ECO:0000269" key="9">
    <source>
    </source>
</evidence>
<evidence type="ECO:0000269" key="10">
    <source>
    </source>
</evidence>
<evidence type="ECO:0000269" key="11">
    <source>
    </source>
</evidence>
<evidence type="ECO:0000269" key="12">
    <source>
    </source>
</evidence>
<evidence type="ECO:0000269" key="13">
    <source>
    </source>
</evidence>
<evidence type="ECO:0000303" key="14">
    <source>
    </source>
</evidence>
<evidence type="ECO:0000312" key="15">
    <source>
        <dbReference type="HGNC" id="HGNC:4691"/>
    </source>
</evidence>
<name>GUC2F_HUMAN</name>
<protein>
    <recommendedName>
        <fullName>Retinal guanylyl cyclase 2</fullName>
        <shortName evidence="14">RETGC-2</shortName>
        <ecNumber evidence="13">4.6.1.2</ecNumber>
    </recommendedName>
    <alternativeName>
        <fullName evidence="15">Guanylate cyclase 2F, retinal</fullName>
    </alternativeName>
    <alternativeName>
        <fullName>Guanylate cyclase F</fullName>
        <shortName>GC-F</shortName>
    </alternativeName>
    <alternativeName>
        <fullName>Rod outer segment membrane guanylate cyclase 2</fullName>
        <shortName>ROS-GC2</shortName>
    </alternativeName>
</protein>
<keyword id="KW-0966">Cell projection</keyword>
<keyword id="KW-0141">cGMP biosynthesis</keyword>
<keyword id="KW-1015">Disulfide bond</keyword>
<keyword id="KW-0342">GTP-binding</keyword>
<keyword id="KW-0456">Lyase</keyword>
<keyword id="KW-0472">Membrane</keyword>
<keyword id="KW-0547">Nucleotide-binding</keyword>
<keyword id="KW-1267">Proteomics identification</keyword>
<keyword id="KW-1185">Reference proteome</keyword>
<keyword id="KW-0716">Sensory transduction</keyword>
<keyword id="KW-0732">Signal</keyword>
<keyword id="KW-0812">Transmembrane</keyword>
<keyword id="KW-1133">Transmembrane helix</keyword>
<keyword id="KW-0844">Vision</keyword>
<organism>
    <name type="scientific">Homo sapiens</name>
    <name type="common">Human</name>
    <dbReference type="NCBI Taxonomy" id="9606"/>
    <lineage>
        <taxon>Eukaryota</taxon>
        <taxon>Metazoa</taxon>
        <taxon>Chordata</taxon>
        <taxon>Craniata</taxon>
        <taxon>Vertebrata</taxon>
        <taxon>Euteleostomi</taxon>
        <taxon>Mammalia</taxon>
        <taxon>Eutheria</taxon>
        <taxon>Euarchontoglires</taxon>
        <taxon>Primates</taxon>
        <taxon>Haplorrhini</taxon>
        <taxon>Catarrhini</taxon>
        <taxon>Hominidae</taxon>
        <taxon>Homo</taxon>
    </lineage>
</organism>
<accession>P51841</accession>
<accession>Q9UJF1</accession>
<dbReference type="EC" id="4.6.1.2" evidence="13"/>
<dbReference type="EMBL" id="L37378">
    <property type="protein sequence ID" value="AAA74451.1"/>
    <property type="molecule type" value="mRNA"/>
</dbReference>
<dbReference type="EMBL" id="AL031387">
    <property type="status" value="NOT_ANNOTATED_CDS"/>
    <property type="molecule type" value="Genomic_DNA"/>
</dbReference>
<dbReference type="CCDS" id="CCDS14545.1"/>
<dbReference type="PIR" id="I59385">
    <property type="entry name" value="I59385"/>
</dbReference>
<dbReference type="RefSeq" id="NP_001513.2">
    <property type="nucleotide sequence ID" value="NM_001522.3"/>
</dbReference>
<dbReference type="SMR" id="P51841"/>
<dbReference type="BioGRID" id="109241">
    <property type="interactions" value="6"/>
</dbReference>
<dbReference type="FunCoup" id="P51841">
    <property type="interactions" value="179"/>
</dbReference>
<dbReference type="IntAct" id="P51841">
    <property type="interactions" value="6"/>
</dbReference>
<dbReference type="MINT" id="P51841"/>
<dbReference type="STRING" id="9606.ENSP00000218006"/>
<dbReference type="iPTMnet" id="P51841"/>
<dbReference type="PhosphoSitePlus" id="P51841"/>
<dbReference type="BioMuta" id="GUCY2F"/>
<dbReference type="DMDM" id="311033391"/>
<dbReference type="jPOST" id="P51841"/>
<dbReference type="MassIVE" id="P51841"/>
<dbReference type="PaxDb" id="9606-ENSP00000218006"/>
<dbReference type="PeptideAtlas" id="P51841"/>
<dbReference type="ProteomicsDB" id="56431"/>
<dbReference type="Antibodypedia" id="29460">
    <property type="antibodies" value="108 antibodies from 18 providers"/>
</dbReference>
<dbReference type="DNASU" id="2986"/>
<dbReference type="Ensembl" id="ENST00000218006.3">
    <property type="protein sequence ID" value="ENSP00000218006.2"/>
    <property type="gene ID" value="ENSG00000101890.5"/>
</dbReference>
<dbReference type="GeneID" id="2986"/>
<dbReference type="KEGG" id="hsa:2986"/>
<dbReference type="MANE-Select" id="ENST00000218006.3">
    <property type="protein sequence ID" value="ENSP00000218006.2"/>
    <property type="RefSeq nucleotide sequence ID" value="NM_001522.3"/>
    <property type="RefSeq protein sequence ID" value="NP_001513.2"/>
</dbReference>
<dbReference type="UCSC" id="uc065aqx.1">
    <property type="organism name" value="human"/>
</dbReference>
<dbReference type="AGR" id="HGNC:4691"/>
<dbReference type="CTD" id="2986"/>
<dbReference type="DisGeNET" id="2986"/>
<dbReference type="GeneCards" id="GUCY2F"/>
<dbReference type="HGNC" id="HGNC:4691">
    <property type="gene designation" value="GUCY2F"/>
</dbReference>
<dbReference type="HPA" id="ENSG00000101890">
    <property type="expression patterns" value="Tissue enriched (retina)"/>
</dbReference>
<dbReference type="MIM" id="300041">
    <property type="type" value="gene"/>
</dbReference>
<dbReference type="neXtProt" id="NX_P51841"/>
<dbReference type="OpenTargets" id="ENSG00000101890"/>
<dbReference type="PharmGKB" id="PA29071"/>
<dbReference type="VEuPathDB" id="HostDB:ENSG00000101890"/>
<dbReference type="eggNOG" id="KOG1023">
    <property type="taxonomic scope" value="Eukaryota"/>
</dbReference>
<dbReference type="GeneTree" id="ENSGT00940000162146"/>
<dbReference type="HOGENOM" id="CLU_001072_1_0_1"/>
<dbReference type="InParanoid" id="P51841"/>
<dbReference type="OMA" id="QDSQSMR"/>
<dbReference type="OrthoDB" id="1890790at2759"/>
<dbReference type="PAN-GO" id="P51841">
    <property type="GO annotations" value="5 GO annotations based on evolutionary models"/>
</dbReference>
<dbReference type="PhylomeDB" id="P51841"/>
<dbReference type="TreeFam" id="TF106338"/>
<dbReference type="BRENDA" id="4.6.1.2">
    <property type="organism ID" value="2681"/>
</dbReference>
<dbReference type="PathwayCommons" id="P51841"/>
<dbReference type="Reactome" id="R-HSA-2514859">
    <property type="pathway name" value="Inactivation, recovery and regulation of the phototransduction cascade"/>
</dbReference>
<dbReference type="SignaLink" id="P51841"/>
<dbReference type="BioGRID-ORCS" id="2986">
    <property type="hits" value="10 hits in 794 CRISPR screens"/>
</dbReference>
<dbReference type="ChiTaRS" id="GUCY2F">
    <property type="organism name" value="human"/>
</dbReference>
<dbReference type="GenomeRNAi" id="2986"/>
<dbReference type="Pharos" id="P51841">
    <property type="development level" value="Tbio"/>
</dbReference>
<dbReference type="PRO" id="PR:P51841"/>
<dbReference type="Proteomes" id="UP000005640">
    <property type="component" value="Chromosome X"/>
</dbReference>
<dbReference type="RNAct" id="P51841">
    <property type="molecule type" value="protein"/>
</dbReference>
<dbReference type="Bgee" id="ENSG00000101890">
    <property type="expression patterns" value="Expressed in male germ line stem cell (sensu Vertebrata) in testis and 14 other cell types or tissues"/>
</dbReference>
<dbReference type="GO" id="GO:0005640">
    <property type="term" value="C:nuclear outer membrane"/>
    <property type="evidence" value="ECO:0000304"/>
    <property type="project" value="ProtInc"/>
</dbReference>
<dbReference type="GO" id="GO:0097381">
    <property type="term" value="C:photoreceptor disc membrane"/>
    <property type="evidence" value="ECO:0000304"/>
    <property type="project" value="Reactome"/>
</dbReference>
<dbReference type="GO" id="GO:0005886">
    <property type="term" value="C:plasma membrane"/>
    <property type="evidence" value="ECO:0000318"/>
    <property type="project" value="GO_Central"/>
</dbReference>
<dbReference type="GO" id="GO:0120200">
    <property type="term" value="C:rod photoreceptor outer segment"/>
    <property type="evidence" value="ECO:0000250"/>
    <property type="project" value="UniProtKB"/>
</dbReference>
<dbReference type="GO" id="GO:0005524">
    <property type="term" value="F:ATP binding"/>
    <property type="evidence" value="ECO:0007669"/>
    <property type="project" value="InterPro"/>
</dbReference>
<dbReference type="GO" id="GO:0005525">
    <property type="term" value="F:GTP binding"/>
    <property type="evidence" value="ECO:0007669"/>
    <property type="project" value="UniProtKB-KW"/>
</dbReference>
<dbReference type="GO" id="GO:0004383">
    <property type="term" value="F:guanylate cyclase activity"/>
    <property type="evidence" value="ECO:0000318"/>
    <property type="project" value="GO_Central"/>
</dbReference>
<dbReference type="GO" id="GO:0042802">
    <property type="term" value="F:identical protein binding"/>
    <property type="evidence" value="ECO:0007669"/>
    <property type="project" value="Ensembl"/>
</dbReference>
<dbReference type="GO" id="GO:0001653">
    <property type="term" value="F:peptide receptor activity"/>
    <property type="evidence" value="ECO:0000318"/>
    <property type="project" value="GO_Central"/>
</dbReference>
<dbReference type="GO" id="GO:0004672">
    <property type="term" value="F:protein kinase activity"/>
    <property type="evidence" value="ECO:0007669"/>
    <property type="project" value="InterPro"/>
</dbReference>
<dbReference type="GO" id="GO:0044877">
    <property type="term" value="F:protein-containing complex binding"/>
    <property type="evidence" value="ECO:0007669"/>
    <property type="project" value="Ensembl"/>
</dbReference>
<dbReference type="GO" id="GO:0038023">
    <property type="term" value="F:signaling receptor activity"/>
    <property type="evidence" value="ECO:0000304"/>
    <property type="project" value="ProtInc"/>
</dbReference>
<dbReference type="GO" id="GO:0006182">
    <property type="term" value="P:cGMP biosynthetic process"/>
    <property type="evidence" value="ECO:0000318"/>
    <property type="project" value="GO_Central"/>
</dbReference>
<dbReference type="GO" id="GO:0019934">
    <property type="term" value="P:cGMP-mediated signaling"/>
    <property type="evidence" value="ECO:0007669"/>
    <property type="project" value="Ensembl"/>
</dbReference>
<dbReference type="GO" id="GO:0050908">
    <property type="term" value="P:detection of light stimulus involved in visual perception"/>
    <property type="evidence" value="ECO:0007669"/>
    <property type="project" value="Ensembl"/>
</dbReference>
<dbReference type="GO" id="GO:0007168">
    <property type="term" value="P:receptor guanylyl cyclase signaling pathway"/>
    <property type="evidence" value="ECO:0000318"/>
    <property type="project" value="GO_Central"/>
</dbReference>
<dbReference type="GO" id="GO:0022400">
    <property type="term" value="P:regulation of opsin-mediated signaling pathway"/>
    <property type="evidence" value="ECO:0000304"/>
    <property type="project" value="Reactome"/>
</dbReference>
<dbReference type="GO" id="GO:0007601">
    <property type="term" value="P:visual perception"/>
    <property type="evidence" value="ECO:0000304"/>
    <property type="project" value="ProtInc"/>
</dbReference>
<dbReference type="CDD" id="cd07302">
    <property type="entry name" value="CHD"/>
    <property type="match status" value="1"/>
</dbReference>
<dbReference type="CDD" id="cd06371">
    <property type="entry name" value="PBP1_sensory_GC_DEF-like"/>
    <property type="match status" value="1"/>
</dbReference>
<dbReference type="FunFam" id="1.10.510.10:FF:000404">
    <property type="entry name" value="Guanylate cyclase"/>
    <property type="match status" value="1"/>
</dbReference>
<dbReference type="FunFam" id="3.30.70.1230:FF:000013">
    <property type="entry name" value="Guanylate cyclase"/>
    <property type="match status" value="1"/>
</dbReference>
<dbReference type="FunFam" id="3.40.50.2300:FF:000114">
    <property type="entry name" value="Guanylate cyclase"/>
    <property type="match status" value="1"/>
</dbReference>
<dbReference type="Gene3D" id="3.40.50.2300">
    <property type="match status" value="2"/>
</dbReference>
<dbReference type="Gene3D" id="3.30.70.1230">
    <property type="entry name" value="Nucleotide cyclase"/>
    <property type="match status" value="1"/>
</dbReference>
<dbReference type="Gene3D" id="1.10.510.10">
    <property type="entry name" value="Transferase(Phosphotransferase) domain 1"/>
    <property type="match status" value="1"/>
</dbReference>
<dbReference type="InterPro" id="IPR001054">
    <property type="entry name" value="A/G_cyclase"/>
</dbReference>
<dbReference type="InterPro" id="IPR018297">
    <property type="entry name" value="A/G_cyclase_CS"/>
</dbReference>
<dbReference type="InterPro" id="IPR001828">
    <property type="entry name" value="ANF_lig-bd_rcpt"/>
</dbReference>
<dbReference type="InterPro" id="IPR050401">
    <property type="entry name" value="Cyclic_nucleotide_synthase"/>
</dbReference>
<dbReference type="InterPro" id="IPR011645">
    <property type="entry name" value="HNOB_dom_associated"/>
</dbReference>
<dbReference type="InterPro" id="IPR011009">
    <property type="entry name" value="Kinase-like_dom_sf"/>
</dbReference>
<dbReference type="InterPro" id="IPR029787">
    <property type="entry name" value="Nucleotide_cyclase"/>
</dbReference>
<dbReference type="InterPro" id="IPR028082">
    <property type="entry name" value="Peripla_BP_I"/>
</dbReference>
<dbReference type="InterPro" id="IPR000719">
    <property type="entry name" value="Prot_kinase_dom"/>
</dbReference>
<dbReference type="InterPro" id="IPR001245">
    <property type="entry name" value="Ser-Thr/Tyr_kinase_cat_dom"/>
</dbReference>
<dbReference type="PANTHER" id="PTHR11920">
    <property type="entry name" value="GUANYLYL CYCLASE"/>
    <property type="match status" value="1"/>
</dbReference>
<dbReference type="PANTHER" id="PTHR11920:SF349">
    <property type="entry name" value="RETINAL GUANYLYL CYCLASE 2"/>
    <property type="match status" value="1"/>
</dbReference>
<dbReference type="Pfam" id="PF01094">
    <property type="entry name" value="ANF_receptor"/>
    <property type="match status" value="1"/>
</dbReference>
<dbReference type="Pfam" id="PF00211">
    <property type="entry name" value="Guanylate_cyc"/>
    <property type="match status" value="1"/>
</dbReference>
<dbReference type="Pfam" id="PF07701">
    <property type="entry name" value="HNOBA"/>
    <property type="match status" value="1"/>
</dbReference>
<dbReference type="Pfam" id="PF07714">
    <property type="entry name" value="PK_Tyr_Ser-Thr"/>
    <property type="match status" value="1"/>
</dbReference>
<dbReference type="PRINTS" id="PR00109">
    <property type="entry name" value="TYRKINASE"/>
</dbReference>
<dbReference type="SMART" id="SM00044">
    <property type="entry name" value="CYCc"/>
    <property type="match status" value="1"/>
</dbReference>
<dbReference type="SUPFAM" id="SSF55073">
    <property type="entry name" value="Nucleotide cyclase"/>
    <property type="match status" value="1"/>
</dbReference>
<dbReference type="SUPFAM" id="SSF53822">
    <property type="entry name" value="Periplasmic binding protein-like I"/>
    <property type="match status" value="1"/>
</dbReference>
<dbReference type="SUPFAM" id="SSF56112">
    <property type="entry name" value="Protein kinase-like (PK-like)"/>
    <property type="match status" value="1"/>
</dbReference>
<dbReference type="PROSITE" id="PS00452">
    <property type="entry name" value="GUANYLATE_CYCLASE_1"/>
    <property type="match status" value="1"/>
</dbReference>
<dbReference type="PROSITE" id="PS50125">
    <property type="entry name" value="GUANYLATE_CYCLASE_2"/>
    <property type="match status" value="1"/>
</dbReference>
<dbReference type="PROSITE" id="PS50011">
    <property type="entry name" value="PROTEIN_KINASE_DOM"/>
    <property type="match status" value="1"/>
</dbReference>